<accession>A6WRU8</accession>
<dbReference type="EMBL" id="CP000753">
    <property type="protein sequence ID" value="ABS09537.1"/>
    <property type="molecule type" value="Genomic_DNA"/>
</dbReference>
<dbReference type="RefSeq" id="WP_006082793.1">
    <property type="nucleotide sequence ID" value="NC_009665.1"/>
</dbReference>
<dbReference type="SMR" id="A6WRU8"/>
<dbReference type="KEGG" id="sbm:Shew185_3410"/>
<dbReference type="HOGENOM" id="CLU_017633_0_7_6"/>
<dbReference type="GO" id="GO:0005737">
    <property type="term" value="C:cytoplasm"/>
    <property type="evidence" value="ECO:0007669"/>
    <property type="project" value="UniProtKB-SubCell"/>
</dbReference>
<dbReference type="GO" id="GO:0005524">
    <property type="term" value="F:ATP binding"/>
    <property type="evidence" value="ECO:0007669"/>
    <property type="project" value="InterPro"/>
</dbReference>
<dbReference type="GO" id="GO:0031072">
    <property type="term" value="F:heat shock protein binding"/>
    <property type="evidence" value="ECO:0007669"/>
    <property type="project" value="InterPro"/>
</dbReference>
<dbReference type="GO" id="GO:0051082">
    <property type="term" value="F:unfolded protein binding"/>
    <property type="evidence" value="ECO:0007669"/>
    <property type="project" value="UniProtKB-UniRule"/>
</dbReference>
<dbReference type="GO" id="GO:0008270">
    <property type="term" value="F:zinc ion binding"/>
    <property type="evidence" value="ECO:0007669"/>
    <property type="project" value="UniProtKB-UniRule"/>
</dbReference>
<dbReference type="GO" id="GO:0051085">
    <property type="term" value="P:chaperone cofactor-dependent protein refolding"/>
    <property type="evidence" value="ECO:0007669"/>
    <property type="project" value="TreeGrafter"/>
</dbReference>
<dbReference type="GO" id="GO:0006260">
    <property type="term" value="P:DNA replication"/>
    <property type="evidence" value="ECO:0007669"/>
    <property type="project" value="UniProtKB-KW"/>
</dbReference>
<dbReference type="GO" id="GO:0042026">
    <property type="term" value="P:protein refolding"/>
    <property type="evidence" value="ECO:0007669"/>
    <property type="project" value="TreeGrafter"/>
</dbReference>
<dbReference type="GO" id="GO:0009408">
    <property type="term" value="P:response to heat"/>
    <property type="evidence" value="ECO:0007669"/>
    <property type="project" value="InterPro"/>
</dbReference>
<dbReference type="CDD" id="cd06257">
    <property type="entry name" value="DnaJ"/>
    <property type="match status" value="1"/>
</dbReference>
<dbReference type="CDD" id="cd10747">
    <property type="entry name" value="DnaJ_C"/>
    <property type="match status" value="1"/>
</dbReference>
<dbReference type="CDD" id="cd10719">
    <property type="entry name" value="DnaJ_zf"/>
    <property type="match status" value="1"/>
</dbReference>
<dbReference type="FunFam" id="1.10.287.110:FF:000003">
    <property type="entry name" value="Molecular chaperone DnaJ"/>
    <property type="match status" value="1"/>
</dbReference>
<dbReference type="FunFam" id="2.10.230.10:FF:000002">
    <property type="entry name" value="Molecular chaperone DnaJ"/>
    <property type="match status" value="1"/>
</dbReference>
<dbReference type="FunFam" id="2.60.260.20:FF:000004">
    <property type="entry name" value="Molecular chaperone DnaJ"/>
    <property type="match status" value="1"/>
</dbReference>
<dbReference type="Gene3D" id="1.10.287.110">
    <property type="entry name" value="DnaJ domain"/>
    <property type="match status" value="1"/>
</dbReference>
<dbReference type="Gene3D" id="2.10.230.10">
    <property type="entry name" value="Heat shock protein DnaJ, cysteine-rich domain"/>
    <property type="match status" value="1"/>
</dbReference>
<dbReference type="Gene3D" id="2.60.260.20">
    <property type="entry name" value="Urease metallochaperone UreE, N-terminal domain"/>
    <property type="match status" value="2"/>
</dbReference>
<dbReference type="HAMAP" id="MF_01152">
    <property type="entry name" value="DnaJ"/>
    <property type="match status" value="1"/>
</dbReference>
<dbReference type="InterPro" id="IPR012724">
    <property type="entry name" value="DnaJ"/>
</dbReference>
<dbReference type="InterPro" id="IPR002939">
    <property type="entry name" value="DnaJ_C"/>
</dbReference>
<dbReference type="InterPro" id="IPR001623">
    <property type="entry name" value="DnaJ_domain"/>
</dbReference>
<dbReference type="InterPro" id="IPR018253">
    <property type="entry name" value="DnaJ_domain_CS"/>
</dbReference>
<dbReference type="InterPro" id="IPR008971">
    <property type="entry name" value="HSP40/DnaJ_pept-bd"/>
</dbReference>
<dbReference type="InterPro" id="IPR001305">
    <property type="entry name" value="HSP_DnaJ_Cys-rich_dom"/>
</dbReference>
<dbReference type="InterPro" id="IPR036410">
    <property type="entry name" value="HSP_DnaJ_Cys-rich_dom_sf"/>
</dbReference>
<dbReference type="InterPro" id="IPR036869">
    <property type="entry name" value="J_dom_sf"/>
</dbReference>
<dbReference type="NCBIfam" id="TIGR02349">
    <property type="entry name" value="DnaJ_bact"/>
    <property type="match status" value="1"/>
</dbReference>
<dbReference type="NCBIfam" id="NF008035">
    <property type="entry name" value="PRK10767.1"/>
    <property type="match status" value="1"/>
</dbReference>
<dbReference type="PANTHER" id="PTHR43096:SF48">
    <property type="entry name" value="CHAPERONE PROTEIN DNAJ"/>
    <property type="match status" value="1"/>
</dbReference>
<dbReference type="PANTHER" id="PTHR43096">
    <property type="entry name" value="DNAJ HOMOLOG 1, MITOCHONDRIAL-RELATED"/>
    <property type="match status" value="1"/>
</dbReference>
<dbReference type="Pfam" id="PF00226">
    <property type="entry name" value="DnaJ"/>
    <property type="match status" value="1"/>
</dbReference>
<dbReference type="Pfam" id="PF01556">
    <property type="entry name" value="DnaJ_C"/>
    <property type="match status" value="1"/>
</dbReference>
<dbReference type="Pfam" id="PF00684">
    <property type="entry name" value="DnaJ_CXXCXGXG"/>
    <property type="match status" value="1"/>
</dbReference>
<dbReference type="PRINTS" id="PR00625">
    <property type="entry name" value="JDOMAIN"/>
</dbReference>
<dbReference type="SMART" id="SM00271">
    <property type="entry name" value="DnaJ"/>
    <property type="match status" value="1"/>
</dbReference>
<dbReference type="SUPFAM" id="SSF46565">
    <property type="entry name" value="Chaperone J-domain"/>
    <property type="match status" value="1"/>
</dbReference>
<dbReference type="SUPFAM" id="SSF57938">
    <property type="entry name" value="DnaJ/Hsp40 cysteine-rich domain"/>
    <property type="match status" value="1"/>
</dbReference>
<dbReference type="SUPFAM" id="SSF49493">
    <property type="entry name" value="HSP40/DnaJ peptide-binding domain"/>
    <property type="match status" value="2"/>
</dbReference>
<dbReference type="PROSITE" id="PS00636">
    <property type="entry name" value="DNAJ_1"/>
    <property type="match status" value="1"/>
</dbReference>
<dbReference type="PROSITE" id="PS50076">
    <property type="entry name" value="DNAJ_2"/>
    <property type="match status" value="1"/>
</dbReference>
<dbReference type="PROSITE" id="PS51188">
    <property type="entry name" value="ZF_CR"/>
    <property type="match status" value="1"/>
</dbReference>
<feature type="chain" id="PRO_1000085288" description="Chaperone protein DnaJ">
    <location>
        <begin position="1"/>
        <end position="377"/>
    </location>
</feature>
<feature type="domain" description="J" evidence="1">
    <location>
        <begin position="5"/>
        <end position="70"/>
    </location>
</feature>
<feature type="repeat" description="CXXCXGXG motif">
    <location>
        <begin position="146"/>
        <end position="153"/>
    </location>
</feature>
<feature type="repeat" description="CXXCXGXG motif">
    <location>
        <begin position="163"/>
        <end position="170"/>
    </location>
</feature>
<feature type="repeat" description="CXXCXGXG motif">
    <location>
        <begin position="185"/>
        <end position="192"/>
    </location>
</feature>
<feature type="repeat" description="CXXCXGXG motif">
    <location>
        <begin position="199"/>
        <end position="206"/>
    </location>
</feature>
<feature type="zinc finger region" description="CR-type" evidence="1">
    <location>
        <begin position="133"/>
        <end position="211"/>
    </location>
</feature>
<feature type="binding site" evidence="1">
    <location>
        <position position="146"/>
    </location>
    <ligand>
        <name>Zn(2+)</name>
        <dbReference type="ChEBI" id="CHEBI:29105"/>
        <label>1</label>
    </ligand>
</feature>
<feature type="binding site" evidence="1">
    <location>
        <position position="149"/>
    </location>
    <ligand>
        <name>Zn(2+)</name>
        <dbReference type="ChEBI" id="CHEBI:29105"/>
        <label>1</label>
    </ligand>
</feature>
<feature type="binding site" evidence="1">
    <location>
        <position position="163"/>
    </location>
    <ligand>
        <name>Zn(2+)</name>
        <dbReference type="ChEBI" id="CHEBI:29105"/>
        <label>2</label>
    </ligand>
</feature>
<feature type="binding site" evidence="1">
    <location>
        <position position="166"/>
    </location>
    <ligand>
        <name>Zn(2+)</name>
        <dbReference type="ChEBI" id="CHEBI:29105"/>
        <label>2</label>
    </ligand>
</feature>
<feature type="binding site" evidence="1">
    <location>
        <position position="185"/>
    </location>
    <ligand>
        <name>Zn(2+)</name>
        <dbReference type="ChEBI" id="CHEBI:29105"/>
        <label>2</label>
    </ligand>
</feature>
<feature type="binding site" evidence="1">
    <location>
        <position position="188"/>
    </location>
    <ligand>
        <name>Zn(2+)</name>
        <dbReference type="ChEBI" id="CHEBI:29105"/>
        <label>2</label>
    </ligand>
</feature>
<feature type="binding site" evidence="1">
    <location>
        <position position="199"/>
    </location>
    <ligand>
        <name>Zn(2+)</name>
        <dbReference type="ChEBI" id="CHEBI:29105"/>
        <label>1</label>
    </ligand>
</feature>
<feature type="binding site" evidence="1">
    <location>
        <position position="202"/>
    </location>
    <ligand>
        <name>Zn(2+)</name>
        <dbReference type="ChEBI" id="CHEBI:29105"/>
        <label>1</label>
    </ligand>
</feature>
<protein>
    <recommendedName>
        <fullName evidence="1">Chaperone protein DnaJ</fullName>
    </recommendedName>
</protein>
<name>DNAJ_SHEB8</name>
<comment type="function">
    <text evidence="1">Participates actively in the response to hyperosmotic and heat shock by preventing the aggregation of stress-denatured proteins and by disaggregating proteins, also in an autonomous, DnaK-independent fashion. Unfolded proteins bind initially to DnaJ; upon interaction with the DnaJ-bound protein, DnaK hydrolyzes its bound ATP, resulting in the formation of a stable complex. GrpE releases ADP from DnaK; ATP binding to DnaK triggers the release of the substrate protein, thus completing the reaction cycle. Several rounds of ATP-dependent interactions between DnaJ, DnaK and GrpE are required for fully efficient folding. Also involved, together with DnaK and GrpE, in the DNA replication of plasmids through activation of initiation proteins.</text>
</comment>
<comment type="cofactor">
    <cofactor evidence="1">
        <name>Zn(2+)</name>
        <dbReference type="ChEBI" id="CHEBI:29105"/>
    </cofactor>
    <text evidence="1">Binds 2 Zn(2+) ions per monomer.</text>
</comment>
<comment type="subunit">
    <text evidence="1">Homodimer.</text>
</comment>
<comment type="subcellular location">
    <subcellularLocation>
        <location evidence="1">Cytoplasm</location>
    </subcellularLocation>
</comment>
<comment type="domain">
    <text evidence="1">The J domain is necessary and sufficient to stimulate DnaK ATPase activity. Zinc center 1 plays an important role in the autonomous, DnaK-independent chaperone activity of DnaJ. Zinc center 2 is essential for interaction with DnaK and for DnaJ activity.</text>
</comment>
<comment type="similarity">
    <text evidence="1">Belongs to the DnaJ family.</text>
</comment>
<gene>
    <name evidence="1" type="primary">dnaJ</name>
    <name type="ordered locus">Shew185_3410</name>
</gene>
<keyword id="KW-0143">Chaperone</keyword>
<keyword id="KW-0963">Cytoplasm</keyword>
<keyword id="KW-0235">DNA replication</keyword>
<keyword id="KW-0479">Metal-binding</keyword>
<keyword id="KW-0677">Repeat</keyword>
<keyword id="KW-0346">Stress response</keyword>
<keyword id="KW-0862">Zinc</keyword>
<keyword id="KW-0863">Zinc-finger</keyword>
<organism>
    <name type="scientific">Shewanella baltica (strain OS185)</name>
    <dbReference type="NCBI Taxonomy" id="402882"/>
    <lineage>
        <taxon>Bacteria</taxon>
        <taxon>Pseudomonadati</taxon>
        <taxon>Pseudomonadota</taxon>
        <taxon>Gammaproteobacteria</taxon>
        <taxon>Alteromonadales</taxon>
        <taxon>Shewanellaceae</taxon>
        <taxon>Shewanella</taxon>
    </lineage>
</organism>
<sequence length="377" mass="40865">MSKRDYYEVLGVSRDTSEREIKKAYKRLAMKFHPDRNPGDKTAEANFKEIKEAYEILTDADKKAAYDQFGHAGVDPNRGGGGYGGGQGDFGDIFGDVFGDIFGGGRRGGQRQAARGSDLRYNLELSLEEAVKGLTKELRIPTLATCDLCEGSGAKKGTSATTCGTCHGQGQVQMRQGFFAVQQPCPTCHGRGKIIKDPCTKCHGDGRVEKSKTLSVKIPAGVDTGDRIRLAGEGEAGEFGAPAGDLYVQVSVREHAIFVRDGNNLYCEVPISFSKAALGGEIEVPTLDGKVSLKIPAETQTGRMFRLRGKGVKSVRSHAVGDLLCKVVMETPVNLNDRQKELLREFEATLTGESKKHSPKAEGFFDGVKKFFQDLNS</sequence>
<proteinExistence type="inferred from homology"/>
<evidence type="ECO:0000255" key="1">
    <source>
        <dbReference type="HAMAP-Rule" id="MF_01152"/>
    </source>
</evidence>
<reference key="1">
    <citation type="submission" date="2007-07" db="EMBL/GenBank/DDBJ databases">
        <title>Complete sequence of chromosome of Shewanella baltica OS185.</title>
        <authorList>
            <consortium name="US DOE Joint Genome Institute"/>
            <person name="Copeland A."/>
            <person name="Lucas S."/>
            <person name="Lapidus A."/>
            <person name="Barry K."/>
            <person name="Glavina del Rio T."/>
            <person name="Dalin E."/>
            <person name="Tice H."/>
            <person name="Pitluck S."/>
            <person name="Sims D."/>
            <person name="Brettin T."/>
            <person name="Bruce D."/>
            <person name="Detter J.C."/>
            <person name="Han C."/>
            <person name="Schmutz J."/>
            <person name="Larimer F."/>
            <person name="Land M."/>
            <person name="Hauser L."/>
            <person name="Kyrpides N."/>
            <person name="Mikhailova N."/>
            <person name="Brettar I."/>
            <person name="Rodrigues J."/>
            <person name="Konstantinidis K."/>
            <person name="Tiedje J."/>
            <person name="Richardson P."/>
        </authorList>
    </citation>
    <scope>NUCLEOTIDE SEQUENCE [LARGE SCALE GENOMIC DNA]</scope>
    <source>
        <strain>OS185</strain>
    </source>
</reference>